<keyword id="KW-0067">ATP-binding</keyword>
<keyword id="KW-0119">Carbohydrate metabolism</keyword>
<keyword id="KW-0418">Kinase</keyword>
<keyword id="KW-0511">Multifunctional enzyme</keyword>
<keyword id="KW-0547">Nucleotide-binding</keyword>
<keyword id="KW-0548">Nucleotidyltransferase</keyword>
<keyword id="KW-0808">Transferase</keyword>
<accession>A6TE31</accession>
<gene>
    <name evidence="1" type="primary">hldE</name>
    <name type="synonym">rfaE</name>
    <name type="ordered locus">KPN78578_33910</name>
    <name type="ORF">KPN_03456</name>
</gene>
<feature type="chain" id="PRO_0000323492" description="Bifunctional protein HldE">
    <location>
        <begin position="1"/>
        <end position="477"/>
    </location>
</feature>
<feature type="region of interest" description="Ribokinase">
    <location>
        <begin position="1"/>
        <end position="318"/>
    </location>
</feature>
<feature type="region of interest" description="Cytidylyltransferase">
    <location>
        <begin position="344"/>
        <end position="477"/>
    </location>
</feature>
<feature type="active site" evidence="1">
    <location>
        <position position="264"/>
    </location>
</feature>
<feature type="binding site" evidence="1">
    <location>
        <begin position="195"/>
        <end position="198"/>
    </location>
    <ligand>
        <name>ATP</name>
        <dbReference type="ChEBI" id="CHEBI:30616"/>
    </ligand>
</feature>
<comment type="function">
    <text evidence="1">Catalyzes the phosphorylation of D-glycero-D-manno-heptose 7-phosphate at the C-1 position to selectively form D-glycero-beta-D-manno-heptose-1,7-bisphosphate.</text>
</comment>
<comment type="function">
    <text evidence="1">Catalyzes the ADP transfer from ATP to D-glycero-beta-D-manno-heptose 1-phosphate, yielding ADP-D-glycero-beta-D-manno-heptose.</text>
</comment>
<comment type="catalytic activity">
    <reaction evidence="1">
        <text>D-glycero-beta-D-manno-heptose 7-phosphate + ATP = D-glycero-beta-D-manno-heptose 1,7-bisphosphate + ADP + H(+)</text>
        <dbReference type="Rhea" id="RHEA:27473"/>
        <dbReference type="ChEBI" id="CHEBI:15378"/>
        <dbReference type="ChEBI" id="CHEBI:30616"/>
        <dbReference type="ChEBI" id="CHEBI:60204"/>
        <dbReference type="ChEBI" id="CHEBI:60208"/>
        <dbReference type="ChEBI" id="CHEBI:456216"/>
        <dbReference type="EC" id="2.7.1.167"/>
    </reaction>
</comment>
<comment type="catalytic activity">
    <reaction evidence="1">
        <text>D-glycero-beta-D-manno-heptose 1-phosphate + ATP + H(+) = ADP-D-glycero-beta-D-manno-heptose + diphosphate</text>
        <dbReference type="Rhea" id="RHEA:27465"/>
        <dbReference type="ChEBI" id="CHEBI:15378"/>
        <dbReference type="ChEBI" id="CHEBI:30616"/>
        <dbReference type="ChEBI" id="CHEBI:33019"/>
        <dbReference type="ChEBI" id="CHEBI:59967"/>
        <dbReference type="ChEBI" id="CHEBI:61593"/>
        <dbReference type="EC" id="2.7.7.70"/>
    </reaction>
</comment>
<comment type="pathway">
    <text evidence="1">Nucleotide-sugar biosynthesis; ADP-L-glycero-beta-D-manno-heptose biosynthesis; ADP-L-glycero-beta-D-manno-heptose from D-glycero-beta-D-manno-heptose 7-phosphate: step 1/4.</text>
</comment>
<comment type="pathway">
    <text evidence="1">Nucleotide-sugar biosynthesis; ADP-L-glycero-beta-D-manno-heptose biosynthesis; ADP-L-glycero-beta-D-manno-heptose from D-glycero-beta-D-manno-heptose 7-phosphate: step 3/4.</text>
</comment>
<comment type="subunit">
    <text evidence="1">Homodimer.</text>
</comment>
<comment type="similarity">
    <text evidence="1">In the N-terminal section; belongs to the carbohydrate kinase PfkB family.</text>
</comment>
<comment type="similarity">
    <text evidence="1">In the C-terminal section; belongs to the cytidylyltransferase family.</text>
</comment>
<dbReference type="EC" id="2.7.1.167" evidence="1"/>
<dbReference type="EC" id="2.7.7.70" evidence="1"/>
<dbReference type="EMBL" id="CP000647">
    <property type="protein sequence ID" value="ABR78852.1"/>
    <property type="molecule type" value="Genomic_DNA"/>
</dbReference>
<dbReference type="RefSeq" id="WP_002916858.1">
    <property type="nucleotide sequence ID" value="NC_009648.1"/>
</dbReference>
<dbReference type="SMR" id="A6TE31"/>
<dbReference type="STRING" id="272620.KPN_03456"/>
<dbReference type="PaxDb" id="272620-KPN_03456"/>
<dbReference type="DNASU" id="5342560"/>
<dbReference type="EnsemblBacteria" id="ABR78852">
    <property type="protein sequence ID" value="ABR78852"/>
    <property type="gene ID" value="KPN_03456"/>
</dbReference>
<dbReference type="KEGG" id="kpn:KPN_03456"/>
<dbReference type="HOGENOM" id="CLU_021150_2_1_6"/>
<dbReference type="UniPathway" id="UPA00356">
    <property type="reaction ID" value="UER00437"/>
</dbReference>
<dbReference type="UniPathway" id="UPA00356">
    <property type="reaction ID" value="UER00439"/>
</dbReference>
<dbReference type="Proteomes" id="UP000000265">
    <property type="component" value="Chromosome"/>
</dbReference>
<dbReference type="GO" id="GO:0005829">
    <property type="term" value="C:cytosol"/>
    <property type="evidence" value="ECO:0007669"/>
    <property type="project" value="TreeGrafter"/>
</dbReference>
<dbReference type="GO" id="GO:0005524">
    <property type="term" value="F:ATP binding"/>
    <property type="evidence" value="ECO:0007669"/>
    <property type="project" value="UniProtKB-UniRule"/>
</dbReference>
<dbReference type="GO" id="GO:0033785">
    <property type="term" value="F:heptose 7-phosphate kinase activity"/>
    <property type="evidence" value="ECO:0007669"/>
    <property type="project" value="UniProtKB-UniRule"/>
</dbReference>
<dbReference type="GO" id="GO:0033786">
    <property type="term" value="F:heptose-1-phosphate adenylyltransferase activity"/>
    <property type="evidence" value="ECO:0007669"/>
    <property type="project" value="UniProtKB-UniRule"/>
</dbReference>
<dbReference type="GO" id="GO:0016773">
    <property type="term" value="F:phosphotransferase activity, alcohol group as acceptor"/>
    <property type="evidence" value="ECO:0007669"/>
    <property type="project" value="InterPro"/>
</dbReference>
<dbReference type="GO" id="GO:0097171">
    <property type="term" value="P:ADP-L-glycero-beta-D-manno-heptose biosynthetic process"/>
    <property type="evidence" value="ECO:0007669"/>
    <property type="project" value="UniProtKB-UniPathway"/>
</dbReference>
<dbReference type="CDD" id="cd01172">
    <property type="entry name" value="RfaE_like"/>
    <property type="match status" value="1"/>
</dbReference>
<dbReference type="FunFam" id="3.40.1190.20:FF:000002">
    <property type="entry name" value="Bifunctional protein HldE"/>
    <property type="match status" value="1"/>
</dbReference>
<dbReference type="FunFam" id="3.40.50.620:FF:000028">
    <property type="entry name" value="Bifunctional protein HldE"/>
    <property type="match status" value="1"/>
</dbReference>
<dbReference type="Gene3D" id="3.40.1190.20">
    <property type="match status" value="1"/>
</dbReference>
<dbReference type="Gene3D" id="3.40.50.620">
    <property type="entry name" value="HUPs"/>
    <property type="match status" value="1"/>
</dbReference>
<dbReference type="HAMAP" id="MF_01603">
    <property type="entry name" value="HldE"/>
    <property type="match status" value="1"/>
</dbReference>
<dbReference type="InterPro" id="IPR023030">
    <property type="entry name" value="Bifunc_HldE"/>
</dbReference>
<dbReference type="InterPro" id="IPR002173">
    <property type="entry name" value="Carboh/pur_kinase_PfkB_CS"/>
</dbReference>
<dbReference type="InterPro" id="IPR004821">
    <property type="entry name" value="Cyt_trans-like"/>
</dbReference>
<dbReference type="InterPro" id="IPR011611">
    <property type="entry name" value="PfkB_dom"/>
</dbReference>
<dbReference type="InterPro" id="IPR011913">
    <property type="entry name" value="RfaE_dom_I"/>
</dbReference>
<dbReference type="InterPro" id="IPR011914">
    <property type="entry name" value="RfaE_dom_II"/>
</dbReference>
<dbReference type="InterPro" id="IPR029056">
    <property type="entry name" value="Ribokinase-like"/>
</dbReference>
<dbReference type="InterPro" id="IPR014729">
    <property type="entry name" value="Rossmann-like_a/b/a_fold"/>
</dbReference>
<dbReference type="NCBIfam" id="TIGR00125">
    <property type="entry name" value="cyt_tran_rel"/>
    <property type="match status" value="1"/>
</dbReference>
<dbReference type="NCBIfam" id="NF008454">
    <property type="entry name" value="PRK11316.1"/>
    <property type="match status" value="1"/>
</dbReference>
<dbReference type="NCBIfam" id="TIGR02198">
    <property type="entry name" value="rfaE_dom_I"/>
    <property type="match status" value="1"/>
</dbReference>
<dbReference type="NCBIfam" id="TIGR02199">
    <property type="entry name" value="rfaE_dom_II"/>
    <property type="match status" value="1"/>
</dbReference>
<dbReference type="PANTHER" id="PTHR46969">
    <property type="entry name" value="BIFUNCTIONAL PROTEIN HLDE"/>
    <property type="match status" value="1"/>
</dbReference>
<dbReference type="PANTHER" id="PTHR46969:SF1">
    <property type="entry name" value="BIFUNCTIONAL PROTEIN HLDE"/>
    <property type="match status" value="1"/>
</dbReference>
<dbReference type="Pfam" id="PF01467">
    <property type="entry name" value="CTP_transf_like"/>
    <property type="match status" value="1"/>
</dbReference>
<dbReference type="Pfam" id="PF00294">
    <property type="entry name" value="PfkB"/>
    <property type="match status" value="1"/>
</dbReference>
<dbReference type="SUPFAM" id="SSF52374">
    <property type="entry name" value="Nucleotidylyl transferase"/>
    <property type="match status" value="1"/>
</dbReference>
<dbReference type="SUPFAM" id="SSF53613">
    <property type="entry name" value="Ribokinase-like"/>
    <property type="match status" value="1"/>
</dbReference>
<dbReference type="PROSITE" id="PS00583">
    <property type="entry name" value="PFKB_KINASES_1"/>
    <property type="match status" value="1"/>
</dbReference>
<proteinExistence type="inferred from homology"/>
<organism>
    <name type="scientific">Klebsiella pneumoniae subsp. pneumoniae (strain ATCC 700721 / MGH 78578)</name>
    <dbReference type="NCBI Taxonomy" id="272620"/>
    <lineage>
        <taxon>Bacteria</taxon>
        <taxon>Pseudomonadati</taxon>
        <taxon>Pseudomonadota</taxon>
        <taxon>Gammaproteobacteria</taxon>
        <taxon>Enterobacterales</taxon>
        <taxon>Enterobacteriaceae</taxon>
        <taxon>Klebsiella/Raoultella group</taxon>
        <taxon>Klebsiella</taxon>
        <taxon>Klebsiella pneumoniae complex</taxon>
    </lineage>
</organism>
<protein>
    <recommendedName>
        <fullName evidence="1">Bifunctional protein HldE</fullName>
    </recommendedName>
    <domain>
        <recommendedName>
            <fullName evidence="1">D-beta-D-heptose 7-phosphate kinase</fullName>
            <ecNumber evidence="1">2.7.1.167</ecNumber>
        </recommendedName>
        <alternativeName>
            <fullName evidence="1">D-beta-D-heptose 7-phosphotransferase</fullName>
        </alternativeName>
        <alternativeName>
            <fullName evidence="1">D-glycero-beta-D-manno-heptose-7-phosphate kinase</fullName>
        </alternativeName>
    </domain>
    <domain>
        <recommendedName>
            <fullName evidence="1">D-beta-D-heptose 1-phosphate adenylyltransferase</fullName>
            <ecNumber evidence="1">2.7.7.70</ecNumber>
        </recommendedName>
        <alternativeName>
            <fullName evidence="1">D-glycero-beta-D-manno-heptose 1-phosphate adenylyltransferase</fullName>
        </alternativeName>
    </domain>
</protein>
<reference key="1">
    <citation type="submission" date="2006-09" db="EMBL/GenBank/DDBJ databases">
        <authorList>
            <consortium name="The Klebsiella pneumonia Genome Sequencing Project"/>
            <person name="McClelland M."/>
            <person name="Sanderson E.K."/>
            <person name="Spieth J."/>
            <person name="Clifton W.S."/>
            <person name="Latreille P."/>
            <person name="Sabo A."/>
            <person name="Pepin K."/>
            <person name="Bhonagiri V."/>
            <person name="Porwollik S."/>
            <person name="Ali J."/>
            <person name="Wilson R.K."/>
        </authorList>
    </citation>
    <scope>NUCLEOTIDE SEQUENCE [LARGE SCALE GENOMIC DNA]</scope>
    <source>
        <strain>ATCC 700721 / MGH 78578</strain>
    </source>
</reference>
<name>HLDE_KLEP7</name>
<sequence length="477" mass="51152">MKVTLPEFERAGVLVVGDVMLDRYWYGPTSRISPEAPVPVVKVENIEERPGGAANVAMNIASLGATSRLVGLTGIDDAARALSQALANVNVKCDFVSVPTHPTITKLRVLSRNQQLIRLDFEEGFSGVDPQPMHERIQQALGSIGALVLSDYAKGALTSVQTMIRLAREAGVPVLIDPKGTDFERYRGATLLTPNLSEFEAVVGKCQDEAQIVERGMKLIAEFELSALLVTRSEQGMTLLQPGRPPLHMPTQAQEVYDVTGAGDTVIGVLAATLASGNTLEEACYFANAAAGVVVGKLGTSTVSPVELENAVRGRAETGFGVMSEEELKQAVAAARKRGEKVVMTNGVFDILHAGHVSYLANARKLGDRLIVAVNSDASTKRLKGETRPVNPLEQRMIVLGALEAVDWVVSFEEDTPQRLIAGILPDLLVKGGDYKPEQIAGSEEVWANGGEVLVLNFEDGCSTTNIIKKIQKDSDK</sequence>
<evidence type="ECO:0000255" key="1">
    <source>
        <dbReference type="HAMAP-Rule" id="MF_01603"/>
    </source>
</evidence>